<protein>
    <recommendedName>
        <fullName>Pheromone-binding protein Gp-9</fullName>
        <shortName>PBP</shortName>
    </recommendedName>
    <alternativeName>
        <fullName>Putative odorant-binding protein Gp-9</fullName>
    </alternativeName>
</protein>
<keyword id="KW-0085">Behavior</keyword>
<keyword id="KW-1015">Disulfide bond</keyword>
<keyword id="KW-0589">Pheromone response</keyword>
<keyword id="KW-0590">Pheromone-binding</keyword>
<keyword id="KW-0964">Secreted</keyword>
<keyword id="KW-0732">Signal</keyword>
<keyword id="KW-0813">Transport</keyword>
<reference evidence="5" key="1">
    <citation type="journal article" date="2002" name="Science">
        <title>Identification of a major gene regulating complex social behavior.</title>
        <authorList>
            <person name="Krieger M.J.B."/>
            <person name="Ross K.G."/>
        </authorList>
    </citation>
    <scope>NUCLEOTIDE SEQUENCE [GENOMIC DNA]</scope>
</reference>
<accession>Q8WRP6</accession>
<organism>
    <name type="scientific">Solenopsis globularia littoralis</name>
    <name type="common">Fire ant</name>
    <dbReference type="NCBI Taxonomy" id="176593"/>
    <lineage>
        <taxon>Eukaryota</taxon>
        <taxon>Metazoa</taxon>
        <taxon>Ecdysozoa</taxon>
        <taxon>Arthropoda</taxon>
        <taxon>Hexapoda</taxon>
        <taxon>Insecta</taxon>
        <taxon>Pterygota</taxon>
        <taxon>Neoptera</taxon>
        <taxon>Endopterygota</taxon>
        <taxon>Hymenoptera</taxon>
        <taxon>Apocrita</taxon>
        <taxon>Aculeata</taxon>
        <taxon>Formicoidea</taxon>
        <taxon>Formicidae</taxon>
        <taxon>Myrmicinae</taxon>
        <taxon>Solenopsis</taxon>
    </lineage>
</organism>
<evidence type="ECO:0000250" key="1"/>
<evidence type="ECO:0000250" key="2">
    <source>
        <dbReference type="UniProtKB" id="P20797"/>
    </source>
</evidence>
<evidence type="ECO:0000250" key="3">
    <source>
        <dbReference type="UniProtKB" id="Q8WP90"/>
    </source>
</evidence>
<evidence type="ECO:0000255" key="4"/>
<evidence type="ECO:0000312" key="5">
    <source>
        <dbReference type="EMBL" id="AAL51132.1"/>
    </source>
</evidence>
<comment type="function">
    <text evidence="3">Colony queen number, a major feature of social organization, is associated with worker genotype for Gp-9. Colonies are headed by either a single reproductive queen (monogyne form) or multiple queens (polygyne form). Differences in worker Gp-9 genotypes between social forms may cause differences in workers' abilities to recognize queens and regulate their numbers (By similarity).</text>
</comment>
<comment type="subunit">
    <text evidence="2">Homodimer.</text>
</comment>
<comment type="subcellular location">
    <subcellularLocation>
        <location evidence="1">Secreted</location>
    </subcellularLocation>
</comment>
<comment type="similarity">
    <text evidence="4">Belongs to the PBP/GOBP family.</text>
</comment>
<sequence length="156" mass="17337">MKTFVFHIFIFALVAFASASRDSAKKIGSQYEHYATCLTENDAAADDIFTILDITSGHHKNENEHDKQHKNGCVMHCLLEKDGLMTGADYHEEKIREDYIKETGAQPGDKRLEALDTCMNETKDMTDKCDKSLLLVACVLIAEDSLATSTEASTEA</sequence>
<proteinExistence type="inferred from homology"/>
<dbReference type="EMBL" id="AF427906">
    <property type="protein sequence ID" value="AAL51132.1"/>
    <property type="molecule type" value="Genomic_DNA"/>
</dbReference>
<dbReference type="SMR" id="Q8WRP6"/>
<dbReference type="GO" id="GO:0005615">
    <property type="term" value="C:extracellular space"/>
    <property type="evidence" value="ECO:0000250"/>
    <property type="project" value="UniProtKB"/>
</dbReference>
<dbReference type="GO" id="GO:0005550">
    <property type="term" value="F:pheromone binding"/>
    <property type="evidence" value="ECO:0007669"/>
    <property type="project" value="UniProtKB-KW"/>
</dbReference>
<dbReference type="GO" id="GO:0019236">
    <property type="term" value="P:response to pheromone"/>
    <property type="evidence" value="ECO:0007669"/>
    <property type="project" value="UniProtKB-KW"/>
</dbReference>
<dbReference type="GO" id="GO:0035176">
    <property type="term" value="P:social behavior"/>
    <property type="evidence" value="ECO:0000250"/>
    <property type="project" value="UniProtKB"/>
</dbReference>
<dbReference type="CDD" id="cd23992">
    <property type="entry name" value="PBP_GOBP"/>
    <property type="match status" value="1"/>
</dbReference>
<dbReference type="Gene3D" id="1.10.238.20">
    <property type="entry name" value="Pheromone/general odorant binding protein domain"/>
    <property type="match status" value="1"/>
</dbReference>
<dbReference type="InterPro" id="IPR006170">
    <property type="entry name" value="PBP/GOBP"/>
</dbReference>
<dbReference type="InterPro" id="IPR036728">
    <property type="entry name" value="PBP_GOBP_sf"/>
</dbReference>
<dbReference type="InterPro" id="IPR022354">
    <property type="entry name" value="Pheromone-bd_protein_Gp-9"/>
</dbReference>
<dbReference type="Pfam" id="PF01395">
    <property type="entry name" value="PBP_GOBP"/>
    <property type="match status" value="1"/>
</dbReference>
<dbReference type="PRINTS" id="PR02007">
    <property type="entry name" value="ODORANTBPGP9"/>
</dbReference>
<dbReference type="SUPFAM" id="SSF47565">
    <property type="entry name" value="Insect pheromone/odorant-binding proteins"/>
    <property type="match status" value="1"/>
</dbReference>
<name>PBGP9_SOLGI</name>
<feature type="signal peptide" evidence="3">
    <location>
        <begin position="1"/>
        <end position="19"/>
    </location>
</feature>
<feature type="chain" id="PRO_5000061702" description="Pheromone-binding protein Gp-9" evidence="3">
    <location>
        <begin position="20"/>
        <end position="156"/>
    </location>
</feature>
<feature type="disulfide bond" evidence="2">
    <location>
        <begin position="37"/>
        <end position="77"/>
    </location>
</feature>
<feature type="disulfide bond" evidence="2">
    <location>
        <begin position="73"/>
        <end position="129"/>
    </location>
</feature>
<feature type="disulfide bond" evidence="2">
    <location>
        <begin position="118"/>
        <end position="138"/>
    </location>
</feature>
<gene>
    <name evidence="5" type="primary">Gp-9</name>
</gene>